<sequence length="1390" mass="155569">MKAPAVLAPGILVLLFTLVQRSNGECKEALAKSEMNVNMKYQLPNFTAETPIQNVILHEHHIFLGATNYIYVLNEEDLQKVAEYKTGPVLEHPDCFPCQDCSSKANLSGGVWKDNINMALVVDTYYDDQLISCGSVNRGTCQRHVFPHNHTADIQSEVHCIFSPQIEEPSQCPDCVVSALGAKVLSSVKDRFINFFVGNTINSSYFPDHPLHSISVRRLKETKDGFMFLTDQSYIDVLPEFRDSYPIKYVHAFESNNFIYFLTVQRETLDAQTFHTRIIRFCSINSGLHSYMEMPLECILTEKRKKRSTKKEVFNILQAAYVSKPGAQLARQIGASLNDDILFGVFAQSKPDSAEPMDRSAMCAFPIKYVNDFFNKIVNKNNVRCLQHFYGPNHEHCFNRTLLRNSSSCEARRDEYRTEFTTALQRVDLFMGQFSEVLLTSISTFIKGDLTIANLGTSEGRFMQVVVSRSGPSTPHVNFLLDSHPVSPEVIVEHTLNQNGYTLVVTGKKITKIPLNGLGCRHFQSCSQCLSAPPFVQCGWCHDKCVRSEECLSGTWTQQICLPAIYKVFPNSAPLEGGTRLTICGWDFGFRRNNKFDLKKTRVLLGNESCTLTLSESTMNTLKCTVGPAMNKHFNMSIIISNGHGTTQYSTFSYVDPVITSISPKYGPMAGGTLLTLTGNYLNSGNSRHISIGGKTCTLKSVSNSILECYTPAQTISTEFAVKLKIDLANRETSIFSYREDPIVYEIHPTKSFISGGSTITGVGKNLNSVSVPRMVINVHEAGRNFTVACQHRSNSEIICCTTPSLQQLNLQLPLKTKAFFMLDGILSKYFDLIYVHNPVFKPFEKPVMISMGNENVLEIKGNDIDPEAVKGEVLKVGNKSCENIHLHSEAVLCTVPNDLLKLNSELNIEWKQAISSTVLGKVIVQPDQNFTGLIAGVVSISIALLLLLGFFLWLKKRKQIKDLGSELVRYDARVHTPHLDRLVSARSVSPTTEMVSNESVDYRATFPEDQFPNSSQNGSCRQVQYPLTDMSPILTSGDSDISSPLLQNTVHIDLSALNPELVQAVQHVVIGPSSLIVHFNEVIGRGHFGCVYHGTLLDNDGKKIHCAVKSLNRITDIGEVSQFLTEGIIMKDFSHPNVLSLLGICLRSEGSPLVVLPYMKHGDLRNFIRNETHNPTVKDLIGFGLQVAKGMKYLASKKFVHRDLAARNCMLDEKFTVKVADFGLARDMYDKEYYSVHNKTGAKLPVKWMALESLQTQKFTTKSDVWSFGVLLWELMTRGAPPYPDVNTFDITVYLLQGRRLLQPEYCPDPLYEVMLKCWHPKAEMRPSFSELVSRISAIFSTFIGEHYVHVNATYVNVKCVAPYPSLLSSEDNADDEVDTRPASFWETS</sequence>
<protein>
    <recommendedName>
        <fullName>Hepatocyte growth factor receptor</fullName>
        <shortName>HGF receptor</shortName>
        <ecNumber>2.7.10.1</ecNumber>
    </recommendedName>
    <alternativeName>
        <fullName>HGF/SF receptor</fullName>
    </alternativeName>
    <alternativeName>
        <fullName>Proto-oncogene c-Met</fullName>
    </alternativeName>
    <alternativeName>
        <fullName>Scatter factor receptor</fullName>
        <shortName>SF receptor</shortName>
    </alternativeName>
    <alternativeName>
        <fullName>Tyrosine-protein kinase Met</fullName>
    </alternativeName>
</protein>
<name>MET_PANTR</name>
<accession>Q2QLF1</accession>
<gene>
    <name type="primary">MET</name>
</gene>
<organism>
    <name type="scientific">Pan troglodytes</name>
    <name type="common">Chimpanzee</name>
    <dbReference type="NCBI Taxonomy" id="9598"/>
    <lineage>
        <taxon>Eukaryota</taxon>
        <taxon>Metazoa</taxon>
        <taxon>Chordata</taxon>
        <taxon>Craniata</taxon>
        <taxon>Vertebrata</taxon>
        <taxon>Euteleostomi</taxon>
        <taxon>Mammalia</taxon>
        <taxon>Eutheria</taxon>
        <taxon>Euarchontoglires</taxon>
        <taxon>Primates</taxon>
        <taxon>Haplorrhini</taxon>
        <taxon>Catarrhini</taxon>
        <taxon>Hominidae</taxon>
        <taxon>Pan</taxon>
    </lineage>
</organism>
<comment type="function">
    <text evidence="1">Receptor tyrosine kinase that transduces signals from the extracellular matrix into the cytoplasm by binding to hepatocyte growth factor/HGF ligand. Regulates many physiological processes including proliferation, scattering, morphogenesis and survival. Ligand binding at the cell surface induces autophosphorylation of MET on its intracellular domain that provides docking sites for downstream signaling molecules. Following activation by ligand, interacts with the PI3-kinase subunit PIK3R1, PLCG1, SRC, GRB2, STAT3 or the adapter GAB1. Recruitment of these downstream effectors by MET leads to the activation of several signaling cascades including the RAS-ERK, PI3 kinase-AKT, or PLCgamma-PKC. The RAS-ERK activation is associated with the morphogenetic effects while PI3K/AKT coordinates prosurvival effects. During embryonic development, MET signaling plays a role in gastrulation, development and migration of muscles and neuronal precursors, angiogenesis and kidney formation. In adults, participates in wound healing as well as organ regeneration and tissue remodeling. Also promotes differentiation and proliferation of hematopoietic cells (By similarity).</text>
</comment>
<comment type="catalytic activity">
    <reaction evidence="7">
        <text>L-tyrosyl-[protein] + ATP = O-phospho-L-tyrosyl-[protein] + ADP + H(+)</text>
        <dbReference type="Rhea" id="RHEA:10596"/>
        <dbReference type="Rhea" id="RHEA-COMP:10136"/>
        <dbReference type="Rhea" id="RHEA-COMP:20101"/>
        <dbReference type="ChEBI" id="CHEBI:15378"/>
        <dbReference type="ChEBI" id="CHEBI:30616"/>
        <dbReference type="ChEBI" id="CHEBI:46858"/>
        <dbReference type="ChEBI" id="CHEBI:61978"/>
        <dbReference type="ChEBI" id="CHEBI:456216"/>
        <dbReference type="EC" id="2.7.10.1"/>
    </reaction>
</comment>
<comment type="activity regulation">
    <text evidence="1">In its inactive state, the C-terminal tail interacts with the catalytic domain and inhibits the kinase activity. Upon ligand binding, the C-terminal tail is displaced and becomes phosphorylated, thus increasing the kinase activity (By similarity).</text>
</comment>
<comment type="subunit">
    <text evidence="2 3">Heterodimer made of an alpha chain (50 kDa) and a beta chain (145 kDa) which are disulfide linked. Binds PLXNB1. Interacts when phosphorylated with downstream effectors including STAT3, PIK3R1, SRC, PCLG1, GRB2 and GAB1. Interacts with SPSB1, SPSB2 and SPSB4. Interacts with INPP5D/SHIP1. When phosphorylated at Tyr-1356, interacts with INPPL1/SHIP2. Interacts with RANBP9 and RANBP10, as well as SPSB1, SPSB2, SPSB3 and SPSB4. SPSB1 binding occurs in the presence and in the absence of HGF, however HGF treatment has a positive effect on this interaction. Interacts with MUC20; prevents interaction with GRB2 and suppresses hepatocyte growth factor-induced cell proliferation. Interacts with GRB10. Interacts with PTPN1 and PTPN2. Interacts with HSP90AA1 and HSP90AB1; the interaction suppresses MET kinase activity. Interacts with tensin TNS3 (By similarity). Interacts (when phosphorylated) with tensin TNS4 (via SH2 domain); the interaction increases MET protein stability by inhibiting MET endocytosis and subsequent lysosomal degradation (By similarity).</text>
</comment>
<comment type="subcellular location">
    <subcellularLocation>
        <location evidence="1">Membrane</location>
        <topology evidence="1">Single-pass type I membrane protein</topology>
    </subcellularLocation>
</comment>
<comment type="domain">
    <text evidence="1">The kinase domain is involved in SPSB1 binding.</text>
</comment>
<comment type="domain">
    <text evidence="1">The beta-propeller Sema domain mediates binding to HGF.</text>
</comment>
<comment type="PTM">
    <text evidence="2">Autophosphorylated in response to ligand binding on Tyr-1234 and Tyr-1235 in the kinase domain leading to further phosphorylation of Tyr-1349 and Tyr-1356 in the C-terminal multifunctional docking site. Dephosphorylated by PTPRJ at Tyr-1349 and Tyr-1365. Dephosphorylated by PTPN1 and PTPN2 (By similarity).</text>
</comment>
<comment type="PTM">
    <text evidence="2">Ubiquitinated. Ubiquitination by CBL regulates the receptor stability and activity through proteasomal degradation (By similarity).</text>
</comment>
<comment type="PTM">
    <text evidence="2">O-mannosylation of IPT/TIG domains by TMEM260 is required for protein maturation. O-mannosylated residues are composed of single mannose glycans that are not elongated or modified.</text>
</comment>
<comment type="similarity">
    <text evidence="5">Belongs to the protein kinase superfamily. Tyr protein kinase family.</text>
</comment>
<evidence type="ECO:0000250" key="1"/>
<evidence type="ECO:0000250" key="2">
    <source>
        <dbReference type="UniProtKB" id="P08581"/>
    </source>
</evidence>
<evidence type="ECO:0000250" key="3">
    <source>
        <dbReference type="UniProtKB" id="P16056"/>
    </source>
</evidence>
<evidence type="ECO:0000255" key="4"/>
<evidence type="ECO:0000255" key="5">
    <source>
        <dbReference type="PROSITE-ProRule" id="PRU00159"/>
    </source>
</evidence>
<evidence type="ECO:0000255" key="6">
    <source>
        <dbReference type="PROSITE-ProRule" id="PRU00352"/>
    </source>
</evidence>
<evidence type="ECO:0000255" key="7">
    <source>
        <dbReference type="PROSITE-ProRule" id="PRU10028"/>
    </source>
</evidence>
<feature type="signal peptide" evidence="4">
    <location>
        <begin position="1"/>
        <end position="24"/>
    </location>
</feature>
<feature type="chain" id="PRO_0000226057" description="Hepatocyte growth factor receptor">
    <location>
        <begin position="25"/>
        <end position="1390"/>
    </location>
</feature>
<feature type="topological domain" description="Extracellular" evidence="4">
    <location>
        <begin position="25"/>
        <end position="932"/>
    </location>
</feature>
<feature type="transmembrane region" description="Helical" evidence="4">
    <location>
        <begin position="933"/>
        <end position="955"/>
    </location>
</feature>
<feature type="topological domain" description="Cytoplasmic" evidence="4">
    <location>
        <begin position="956"/>
        <end position="1390"/>
    </location>
</feature>
<feature type="domain" description="Sema" evidence="6">
    <location>
        <begin position="27"/>
        <end position="515"/>
    </location>
</feature>
<feature type="domain" description="IPT/TIG 1">
    <location>
        <begin position="563"/>
        <end position="655"/>
    </location>
</feature>
<feature type="domain" description="IPT/TIG 2">
    <location>
        <begin position="657"/>
        <end position="739"/>
    </location>
</feature>
<feature type="domain" description="IPT/TIG 3">
    <location>
        <begin position="742"/>
        <end position="836"/>
    </location>
</feature>
<feature type="domain" description="Protein kinase" evidence="5">
    <location>
        <begin position="1078"/>
        <end position="1345"/>
    </location>
</feature>
<feature type="region of interest" description="Interaction with RANBP9" evidence="1">
    <location>
        <begin position="1212"/>
        <end position="1390"/>
    </location>
</feature>
<feature type="region of interest" description="Interaction with MUC20" evidence="1">
    <location>
        <begin position="1320"/>
        <end position="1359"/>
    </location>
</feature>
<feature type="active site" description="Proton acceptor" evidence="5 7">
    <location>
        <position position="1204"/>
    </location>
</feature>
<feature type="binding site" evidence="5">
    <location>
        <begin position="1084"/>
        <end position="1092"/>
    </location>
    <ligand>
        <name>ATP</name>
        <dbReference type="ChEBI" id="CHEBI:30616"/>
    </ligand>
</feature>
<feature type="binding site" evidence="5">
    <location>
        <position position="1110"/>
    </location>
    <ligand>
        <name>ATP</name>
        <dbReference type="ChEBI" id="CHEBI:30616"/>
    </ligand>
</feature>
<feature type="site" description="Cleavage" evidence="4">
    <location>
        <begin position="307"/>
        <end position="308"/>
    </location>
</feature>
<feature type="modified residue" description="Phosphoserine" evidence="2">
    <location>
        <position position="966"/>
    </location>
</feature>
<feature type="modified residue" description="Phosphothreonine" evidence="2">
    <location>
        <position position="977"/>
    </location>
</feature>
<feature type="modified residue" description="Phosphoserine" evidence="2">
    <location>
        <position position="990"/>
    </location>
</feature>
<feature type="modified residue" description="Phosphoserine" evidence="2">
    <location>
        <position position="997"/>
    </location>
</feature>
<feature type="modified residue" description="Phosphoserine" evidence="2">
    <location>
        <position position="1000"/>
    </location>
</feature>
<feature type="modified residue" description="Phosphotyrosine" evidence="2">
    <location>
        <position position="1003"/>
    </location>
</feature>
<feature type="modified residue" description="Phosphotyrosine" evidence="2">
    <location>
        <position position="1230"/>
    </location>
</feature>
<feature type="modified residue" description="Phosphotyrosine; by autocatalysis" evidence="2">
    <location>
        <position position="1234"/>
    </location>
</feature>
<feature type="modified residue" description="Phosphotyrosine; by autocatalysis" evidence="2">
    <location>
        <position position="1235"/>
    </location>
</feature>
<feature type="modified residue" description="Phosphothreonine" evidence="2">
    <location>
        <position position="1289"/>
    </location>
</feature>
<feature type="modified residue" description="Phosphotyrosine; by autocatalysis" evidence="2">
    <location>
        <position position="1349"/>
    </location>
</feature>
<feature type="modified residue" description="Phosphotyrosine; by autocatalysis" evidence="2">
    <location>
        <position position="1356"/>
    </location>
</feature>
<feature type="modified residue" description="Phosphotyrosine" evidence="2">
    <location>
        <position position="1365"/>
    </location>
</feature>
<feature type="glycosylation site" description="N-linked (GlcNAc...) asparagine" evidence="4">
    <location>
        <position position="45"/>
    </location>
</feature>
<feature type="glycosylation site" description="N-linked (GlcNAc...) asparagine" evidence="4">
    <location>
        <position position="106"/>
    </location>
</feature>
<feature type="glycosylation site" description="N-linked (GlcNAc...) asparagine" evidence="4">
    <location>
        <position position="149"/>
    </location>
</feature>
<feature type="glycosylation site" description="N-linked (GlcNAc...) asparagine" evidence="4">
    <location>
        <position position="202"/>
    </location>
</feature>
<feature type="glycosylation site" description="N-linked (GlcNAc...) asparagine" evidence="4">
    <location>
        <position position="399"/>
    </location>
</feature>
<feature type="glycosylation site" description="N-linked (GlcNAc...) asparagine" evidence="4">
    <location>
        <position position="405"/>
    </location>
</feature>
<feature type="glycosylation site" description="O-linked (Man) threonine" evidence="2">
    <location>
        <position position="582"/>
    </location>
</feature>
<feature type="glycosylation site" description="N-linked (GlcNAc...) asparagine" evidence="4">
    <location>
        <position position="607"/>
    </location>
</feature>
<feature type="glycosylation site" description="N-linked (GlcNAc...) asparagine" evidence="4">
    <location>
        <position position="635"/>
    </location>
</feature>
<feature type="glycosylation site" description="O-linked (Man) threonine" evidence="2">
    <location>
        <position position="676"/>
    </location>
</feature>
<feature type="glycosylation site" description="O-linked (Man) threonine" evidence="2">
    <location>
        <position position="761"/>
    </location>
</feature>
<feature type="glycosylation site" description="N-linked (GlcNAc...) asparagine" evidence="4">
    <location>
        <position position="785"/>
    </location>
</feature>
<feature type="glycosylation site" description="N-linked (GlcNAc...) asparagine" evidence="4">
    <location>
        <position position="879"/>
    </location>
</feature>
<feature type="glycosylation site" description="N-linked (GlcNAc...) asparagine" evidence="4">
    <location>
        <position position="930"/>
    </location>
</feature>
<feature type="disulfide bond" evidence="6">
    <location>
        <begin position="95"/>
        <end position="101"/>
    </location>
</feature>
<feature type="disulfide bond" evidence="6">
    <location>
        <begin position="98"/>
        <end position="160"/>
    </location>
</feature>
<feature type="disulfide bond" evidence="6">
    <location>
        <begin position="133"/>
        <end position="141"/>
    </location>
</feature>
<feature type="disulfide bond" evidence="6">
    <location>
        <begin position="172"/>
        <end position="175"/>
    </location>
</feature>
<feature type="disulfide bond" evidence="6">
    <location>
        <begin position="298"/>
        <end position="363"/>
    </location>
</feature>
<feature type="disulfide bond" evidence="6">
    <location>
        <begin position="385"/>
        <end position="397"/>
    </location>
</feature>
<feature type="disulfide bond" evidence="6">
    <location>
        <begin position="520"/>
        <end position="538"/>
    </location>
</feature>
<feature type="disulfide bond" evidence="6">
    <location>
        <begin position="526"/>
        <end position="561"/>
    </location>
</feature>
<feature type="disulfide bond" evidence="6">
    <location>
        <begin position="529"/>
        <end position="545"/>
    </location>
</feature>
<feature type="disulfide bond" evidence="6">
    <location>
        <begin position="541"/>
        <end position="551"/>
    </location>
</feature>
<proteinExistence type="inferred from homology"/>
<reference key="1">
    <citation type="journal article" date="2003" name="Nature">
        <title>Comparative analyses of multi-species sequences from targeted genomic regions.</title>
        <authorList>
            <person name="Thomas J.W."/>
            <person name="Touchman J.W."/>
            <person name="Blakesley R.W."/>
            <person name="Bouffard G.G."/>
            <person name="Beckstrom-Sternberg S.M."/>
            <person name="Margulies E.H."/>
            <person name="Blanchette M."/>
            <person name="Siepel A.C."/>
            <person name="Thomas P.J."/>
            <person name="McDowell J.C."/>
            <person name="Maskeri B."/>
            <person name="Hansen N.F."/>
            <person name="Schwartz M.S."/>
            <person name="Weber R.J."/>
            <person name="Kent W.J."/>
            <person name="Karolchik D."/>
            <person name="Bruen T.C."/>
            <person name="Bevan R."/>
            <person name="Cutler D.J."/>
            <person name="Schwartz S."/>
            <person name="Elnitski L."/>
            <person name="Idol J.R."/>
            <person name="Prasad A.B."/>
            <person name="Lee-Lin S.-Q."/>
            <person name="Maduro V.V.B."/>
            <person name="Summers T.J."/>
            <person name="Portnoy M.E."/>
            <person name="Dietrich N.L."/>
            <person name="Akhter N."/>
            <person name="Ayele K."/>
            <person name="Benjamin B."/>
            <person name="Cariaga K."/>
            <person name="Brinkley C.P."/>
            <person name="Brooks S.Y."/>
            <person name="Granite S."/>
            <person name="Guan X."/>
            <person name="Gupta J."/>
            <person name="Haghighi P."/>
            <person name="Ho S.-L."/>
            <person name="Huang M.C."/>
            <person name="Karlins E."/>
            <person name="Laric P.L."/>
            <person name="Legaspi R."/>
            <person name="Lim M.J."/>
            <person name="Maduro Q.L."/>
            <person name="Masiello C.A."/>
            <person name="Mastrian S.D."/>
            <person name="McCloskey J.C."/>
            <person name="Pearson R."/>
            <person name="Stantripop S."/>
            <person name="Tiongson E.E."/>
            <person name="Tran J.T."/>
            <person name="Tsurgeon C."/>
            <person name="Vogt J.L."/>
            <person name="Walker M.A."/>
            <person name="Wetherby K.D."/>
            <person name="Wiggins L.S."/>
            <person name="Young A.C."/>
            <person name="Zhang L.-H."/>
            <person name="Osoegawa K."/>
            <person name="Zhu B."/>
            <person name="Zhao B."/>
            <person name="Shu C.L."/>
            <person name="De Jong P.J."/>
            <person name="Lawrence C.E."/>
            <person name="Smit A.F."/>
            <person name="Chakravarti A."/>
            <person name="Haussler D."/>
            <person name="Green P."/>
            <person name="Miller W."/>
            <person name="Green E.D."/>
        </authorList>
    </citation>
    <scope>NUCLEOTIDE SEQUENCE [LARGE SCALE GENOMIC DNA]</scope>
</reference>
<keyword id="KW-0067">ATP-binding</keyword>
<keyword id="KW-1015">Disulfide bond</keyword>
<keyword id="KW-0325">Glycoprotein</keyword>
<keyword id="KW-0418">Kinase</keyword>
<keyword id="KW-0472">Membrane</keyword>
<keyword id="KW-0547">Nucleotide-binding</keyword>
<keyword id="KW-0597">Phosphoprotein</keyword>
<keyword id="KW-0656">Proto-oncogene</keyword>
<keyword id="KW-0675">Receptor</keyword>
<keyword id="KW-1185">Reference proteome</keyword>
<keyword id="KW-0677">Repeat</keyword>
<keyword id="KW-0732">Signal</keyword>
<keyword id="KW-0808">Transferase</keyword>
<keyword id="KW-0812">Transmembrane</keyword>
<keyword id="KW-1133">Transmembrane helix</keyword>
<keyword id="KW-0829">Tyrosine-protein kinase</keyword>
<keyword id="KW-0832">Ubl conjugation</keyword>
<dbReference type="EC" id="2.7.10.1"/>
<dbReference type="EMBL" id="DP000016">
    <property type="protein sequence ID" value="AAR16247.2"/>
    <property type="molecule type" value="Genomic_DNA"/>
</dbReference>
<dbReference type="RefSeq" id="NP_001129302.1">
    <property type="nucleotide sequence ID" value="NM_001135830.1"/>
</dbReference>
<dbReference type="SMR" id="Q2QLF1"/>
<dbReference type="FunCoup" id="Q2QLF1">
    <property type="interactions" value="1043"/>
</dbReference>
<dbReference type="STRING" id="9598.ENSPTRP00000083162"/>
<dbReference type="GlyCosmos" id="Q2QLF1">
    <property type="glycosylation" value="11 sites, No reported glycans"/>
</dbReference>
<dbReference type="PaxDb" id="9598-ENSPTRP00000057112"/>
<dbReference type="GeneID" id="463671"/>
<dbReference type="KEGG" id="ptr:463671"/>
<dbReference type="CTD" id="4233"/>
<dbReference type="eggNOG" id="KOG1095">
    <property type="taxonomic scope" value="Eukaryota"/>
</dbReference>
<dbReference type="eggNOG" id="KOG3610">
    <property type="taxonomic scope" value="Eukaryota"/>
</dbReference>
<dbReference type="HOGENOM" id="CLU_005158_0_0_1"/>
<dbReference type="InParanoid" id="Q2QLF1"/>
<dbReference type="TreeFam" id="TF317402"/>
<dbReference type="Proteomes" id="UP000002277">
    <property type="component" value="Unplaced"/>
</dbReference>
<dbReference type="GO" id="GO:0009925">
    <property type="term" value="C:basal plasma membrane"/>
    <property type="evidence" value="ECO:0000318"/>
    <property type="project" value="GO_Central"/>
</dbReference>
<dbReference type="GO" id="GO:0005886">
    <property type="term" value="C:plasma membrane"/>
    <property type="evidence" value="ECO:0000318"/>
    <property type="project" value="GO_Central"/>
</dbReference>
<dbReference type="GO" id="GO:0043235">
    <property type="term" value="C:receptor complex"/>
    <property type="evidence" value="ECO:0000318"/>
    <property type="project" value="GO_Central"/>
</dbReference>
<dbReference type="GO" id="GO:0005524">
    <property type="term" value="F:ATP binding"/>
    <property type="evidence" value="ECO:0007669"/>
    <property type="project" value="UniProtKB-KW"/>
</dbReference>
<dbReference type="GO" id="GO:0005008">
    <property type="term" value="F:hepatocyte growth factor receptor activity"/>
    <property type="evidence" value="ECO:0000318"/>
    <property type="project" value="GO_Central"/>
</dbReference>
<dbReference type="GO" id="GO:0017154">
    <property type="term" value="F:semaphorin receptor activity"/>
    <property type="evidence" value="ECO:0007669"/>
    <property type="project" value="InterPro"/>
</dbReference>
<dbReference type="GO" id="GO:0007169">
    <property type="term" value="P:cell surface receptor protein tyrosine kinase signaling pathway"/>
    <property type="evidence" value="ECO:0000318"/>
    <property type="project" value="GO_Central"/>
</dbReference>
<dbReference type="GO" id="GO:0001889">
    <property type="term" value="P:liver development"/>
    <property type="evidence" value="ECO:0000318"/>
    <property type="project" value="GO_Central"/>
</dbReference>
<dbReference type="GO" id="GO:0030182">
    <property type="term" value="P:neuron differentiation"/>
    <property type="evidence" value="ECO:0000318"/>
    <property type="project" value="GO_Central"/>
</dbReference>
<dbReference type="GO" id="GO:0031016">
    <property type="term" value="P:pancreas development"/>
    <property type="evidence" value="ECO:0000318"/>
    <property type="project" value="GO_Central"/>
</dbReference>
<dbReference type="GO" id="GO:0050918">
    <property type="term" value="P:positive chemotaxis"/>
    <property type="evidence" value="ECO:0000250"/>
    <property type="project" value="UniProtKB"/>
</dbReference>
<dbReference type="GO" id="GO:2001028">
    <property type="term" value="P:positive regulation of endothelial cell chemotaxis"/>
    <property type="evidence" value="ECO:0000250"/>
    <property type="project" value="UniProtKB"/>
</dbReference>
<dbReference type="GO" id="GO:0071526">
    <property type="term" value="P:semaphorin-plexin signaling pathway"/>
    <property type="evidence" value="ECO:0000250"/>
    <property type="project" value="UniProtKB"/>
</dbReference>
<dbReference type="CDD" id="cd00603">
    <property type="entry name" value="IPT_PCSR"/>
    <property type="match status" value="1"/>
</dbReference>
<dbReference type="CDD" id="cd01180">
    <property type="entry name" value="IPT_plexin_repeat1"/>
    <property type="match status" value="1"/>
</dbReference>
<dbReference type="CDD" id="cd01179">
    <property type="entry name" value="IPT_plexin_repeat2"/>
    <property type="match status" value="1"/>
</dbReference>
<dbReference type="CDD" id="cd01181">
    <property type="entry name" value="IPT_plexin_repeat3"/>
    <property type="match status" value="1"/>
</dbReference>
<dbReference type="CDD" id="cd05058">
    <property type="entry name" value="PTKc_Met_Ron"/>
    <property type="match status" value="1"/>
</dbReference>
<dbReference type="CDD" id="cd11278">
    <property type="entry name" value="Sema_MET"/>
    <property type="match status" value="1"/>
</dbReference>
<dbReference type="FunFam" id="1.10.510.10:FF:000093">
    <property type="entry name" value="Hepatocyte growth factor receptor"/>
    <property type="match status" value="1"/>
</dbReference>
<dbReference type="FunFam" id="2.130.10.10:FF:000088">
    <property type="entry name" value="Hepatocyte growth factor receptor"/>
    <property type="match status" value="1"/>
</dbReference>
<dbReference type="FunFam" id="2.60.40.10:FF:000213">
    <property type="entry name" value="Hepatocyte growth factor receptor"/>
    <property type="match status" value="1"/>
</dbReference>
<dbReference type="FunFam" id="2.60.40.10:FF:000400">
    <property type="entry name" value="Hepatocyte growth factor receptor"/>
    <property type="match status" value="1"/>
</dbReference>
<dbReference type="FunFam" id="2.60.40.10:FF:002708">
    <property type="entry name" value="Hepatocyte growth factor receptor"/>
    <property type="match status" value="1"/>
</dbReference>
<dbReference type="FunFam" id="3.30.200.20:FF:000188">
    <property type="entry name" value="Hepatocyte growth factor receptor"/>
    <property type="match status" value="1"/>
</dbReference>
<dbReference type="FunFam" id="3.30.1680.10:FF:000006">
    <property type="entry name" value="Macrophage-stimulating 1 receptor b"/>
    <property type="match status" value="1"/>
</dbReference>
<dbReference type="Gene3D" id="2.60.40.10">
    <property type="entry name" value="Immunoglobulins"/>
    <property type="match status" value="3"/>
</dbReference>
<dbReference type="Gene3D" id="3.30.200.20">
    <property type="entry name" value="Phosphorylase Kinase, domain 1"/>
    <property type="match status" value="1"/>
</dbReference>
<dbReference type="Gene3D" id="1.10.510.10">
    <property type="entry name" value="Transferase(Phosphotransferase) domain 1"/>
    <property type="match status" value="1"/>
</dbReference>
<dbReference type="Gene3D" id="2.130.10.10">
    <property type="entry name" value="YVTN repeat-like/Quinoprotein amine dehydrogenase"/>
    <property type="match status" value="1"/>
</dbReference>
<dbReference type="InterPro" id="IPR013783">
    <property type="entry name" value="Ig-like_fold"/>
</dbReference>
<dbReference type="InterPro" id="IPR014756">
    <property type="entry name" value="Ig_E-set"/>
</dbReference>
<dbReference type="InterPro" id="IPR002909">
    <property type="entry name" value="IPT_dom"/>
</dbReference>
<dbReference type="InterPro" id="IPR011009">
    <property type="entry name" value="Kinase-like_dom_sf"/>
</dbReference>
<dbReference type="InterPro" id="IPR031148">
    <property type="entry name" value="Plexin"/>
</dbReference>
<dbReference type="InterPro" id="IPR002165">
    <property type="entry name" value="Plexin_repeat"/>
</dbReference>
<dbReference type="InterPro" id="IPR000719">
    <property type="entry name" value="Prot_kinase_dom"/>
</dbReference>
<dbReference type="InterPro" id="IPR017441">
    <property type="entry name" value="Protein_kinase_ATP_BS"/>
</dbReference>
<dbReference type="InterPro" id="IPR016201">
    <property type="entry name" value="PSI"/>
</dbReference>
<dbReference type="InterPro" id="IPR001627">
    <property type="entry name" value="Semap_dom"/>
</dbReference>
<dbReference type="InterPro" id="IPR036352">
    <property type="entry name" value="Semap_dom_sf"/>
</dbReference>
<dbReference type="InterPro" id="IPR001245">
    <property type="entry name" value="Ser-Thr/Tyr_kinase_cat_dom"/>
</dbReference>
<dbReference type="InterPro" id="IPR008266">
    <property type="entry name" value="Tyr_kinase_AS"/>
</dbReference>
<dbReference type="InterPro" id="IPR020635">
    <property type="entry name" value="Tyr_kinase_cat_dom"/>
</dbReference>
<dbReference type="InterPro" id="IPR016244">
    <property type="entry name" value="Tyr_kinase_HGF/MSP_rcpt"/>
</dbReference>
<dbReference type="InterPro" id="IPR015943">
    <property type="entry name" value="WD40/YVTN_repeat-like_dom_sf"/>
</dbReference>
<dbReference type="PANTHER" id="PTHR22625:SF61">
    <property type="entry name" value="HEPATOCYTE GROWTH FACTOR RECEPTOR"/>
    <property type="match status" value="1"/>
</dbReference>
<dbReference type="PANTHER" id="PTHR22625">
    <property type="entry name" value="PLEXIN"/>
    <property type="match status" value="1"/>
</dbReference>
<dbReference type="Pfam" id="PF07714">
    <property type="entry name" value="PK_Tyr_Ser-Thr"/>
    <property type="match status" value="1"/>
</dbReference>
<dbReference type="Pfam" id="PF01437">
    <property type="entry name" value="PSI"/>
    <property type="match status" value="1"/>
</dbReference>
<dbReference type="Pfam" id="PF01403">
    <property type="entry name" value="Sema"/>
    <property type="match status" value="1"/>
</dbReference>
<dbReference type="Pfam" id="PF01833">
    <property type="entry name" value="TIG"/>
    <property type="match status" value="3"/>
</dbReference>
<dbReference type="PIRSF" id="PIRSF000617">
    <property type="entry name" value="TyrPK_HGF-R"/>
    <property type="match status" value="1"/>
</dbReference>
<dbReference type="PRINTS" id="PR00109">
    <property type="entry name" value="TYRKINASE"/>
</dbReference>
<dbReference type="SMART" id="SM00429">
    <property type="entry name" value="IPT"/>
    <property type="match status" value="4"/>
</dbReference>
<dbReference type="SMART" id="SM00423">
    <property type="entry name" value="PSI"/>
    <property type="match status" value="1"/>
</dbReference>
<dbReference type="SMART" id="SM00630">
    <property type="entry name" value="Sema"/>
    <property type="match status" value="1"/>
</dbReference>
<dbReference type="SMART" id="SM00219">
    <property type="entry name" value="TyrKc"/>
    <property type="match status" value="1"/>
</dbReference>
<dbReference type="SUPFAM" id="SSF81296">
    <property type="entry name" value="E set domains"/>
    <property type="match status" value="3"/>
</dbReference>
<dbReference type="SUPFAM" id="SSF103575">
    <property type="entry name" value="Plexin repeat"/>
    <property type="match status" value="1"/>
</dbReference>
<dbReference type="SUPFAM" id="SSF56112">
    <property type="entry name" value="Protein kinase-like (PK-like)"/>
    <property type="match status" value="1"/>
</dbReference>
<dbReference type="SUPFAM" id="SSF101912">
    <property type="entry name" value="Sema domain"/>
    <property type="match status" value="1"/>
</dbReference>
<dbReference type="PROSITE" id="PS00107">
    <property type="entry name" value="PROTEIN_KINASE_ATP"/>
    <property type="match status" value="1"/>
</dbReference>
<dbReference type="PROSITE" id="PS50011">
    <property type="entry name" value="PROTEIN_KINASE_DOM"/>
    <property type="match status" value="1"/>
</dbReference>
<dbReference type="PROSITE" id="PS00109">
    <property type="entry name" value="PROTEIN_KINASE_TYR"/>
    <property type="match status" value="1"/>
</dbReference>
<dbReference type="PROSITE" id="PS51004">
    <property type="entry name" value="SEMA"/>
    <property type="match status" value="1"/>
</dbReference>